<comment type="cofactor">
    <cofactor evidence="1">
        <name>Zn(2+)</name>
        <dbReference type="ChEBI" id="CHEBI:29105"/>
    </cofactor>
    <text evidence="1">Binds 1 zinc ion per subunit.</text>
</comment>
<comment type="subcellular location">
    <subcellularLocation>
        <location evidence="1">Cell inner membrane</location>
        <topology evidence="1">Multi-pass membrane protein</topology>
    </subcellularLocation>
</comment>
<comment type="similarity">
    <text evidence="1">Belongs to the peptidase M48B family.</text>
</comment>
<dbReference type="EC" id="3.4.24.-" evidence="1"/>
<dbReference type="EMBL" id="CP000038">
    <property type="protein sequence ID" value="AAZ88044.1"/>
    <property type="molecule type" value="Genomic_DNA"/>
</dbReference>
<dbReference type="RefSeq" id="WP_000984517.1">
    <property type="nucleotide sequence ID" value="NC_007384.1"/>
</dbReference>
<dbReference type="SMR" id="Q3Z2G8"/>
<dbReference type="MEROPS" id="M48.002"/>
<dbReference type="GeneID" id="93776079"/>
<dbReference type="KEGG" id="ssn:SSON_1332"/>
<dbReference type="HOGENOM" id="CLU_042266_1_0_6"/>
<dbReference type="Proteomes" id="UP000002529">
    <property type="component" value="Chromosome"/>
</dbReference>
<dbReference type="GO" id="GO:0005886">
    <property type="term" value="C:plasma membrane"/>
    <property type="evidence" value="ECO:0007669"/>
    <property type="project" value="UniProtKB-SubCell"/>
</dbReference>
<dbReference type="GO" id="GO:0004222">
    <property type="term" value="F:metalloendopeptidase activity"/>
    <property type="evidence" value="ECO:0007669"/>
    <property type="project" value="UniProtKB-UniRule"/>
</dbReference>
<dbReference type="GO" id="GO:0008270">
    <property type="term" value="F:zinc ion binding"/>
    <property type="evidence" value="ECO:0007669"/>
    <property type="project" value="UniProtKB-UniRule"/>
</dbReference>
<dbReference type="GO" id="GO:0006508">
    <property type="term" value="P:proteolysis"/>
    <property type="evidence" value="ECO:0007669"/>
    <property type="project" value="UniProtKB-KW"/>
</dbReference>
<dbReference type="CDD" id="cd07335">
    <property type="entry name" value="M48B_HtpX_like"/>
    <property type="match status" value="1"/>
</dbReference>
<dbReference type="FunFam" id="3.30.2010.10:FF:000001">
    <property type="entry name" value="Protease HtpX"/>
    <property type="match status" value="1"/>
</dbReference>
<dbReference type="Gene3D" id="3.30.2010.10">
    <property type="entry name" value="Metalloproteases ('zincins'), catalytic domain"/>
    <property type="match status" value="1"/>
</dbReference>
<dbReference type="HAMAP" id="MF_00188">
    <property type="entry name" value="Pept_M48_protease_HtpX"/>
    <property type="match status" value="1"/>
</dbReference>
<dbReference type="InterPro" id="IPR050083">
    <property type="entry name" value="HtpX_protease"/>
</dbReference>
<dbReference type="InterPro" id="IPR022919">
    <property type="entry name" value="Pept_M48_protease_HtpX"/>
</dbReference>
<dbReference type="InterPro" id="IPR001915">
    <property type="entry name" value="Peptidase_M48"/>
</dbReference>
<dbReference type="NCBIfam" id="NF003965">
    <property type="entry name" value="PRK05457.1"/>
    <property type="match status" value="1"/>
</dbReference>
<dbReference type="PANTHER" id="PTHR43221">
    <property type="entry name" value="PROTEASE HTPX"/>
    <property type="match status" value="1"/>
</dbReference>
<dbReference type="PANTHER" id="PTHR43221:SF1">
    <property type="entry name" value="PROTEASE HTPX"/>
    <property type="match status" value="1"/>
</dbReference>
<dbReference type="Pfam" id="PF01435">
    <property type="entry name" value="Peptidase_M48"/>
    <property type="match status" value="1"/>
</dbReference>
<reference key="1">
    <citation type="journal article" date="2005" name="Nucleic Acids Res.">
        <title>Genome dynamics and diversity of Shigella species, the etiologic agents of bacillary dysentery.</title>
        <authorList>
            <person name="Yang F."/>
            <person name="Yang J."/>
            <person name="Zhang X."/>
            <person name="Chen L."/>
            <person name="Jiang Y."/>
            <person name="Yan Y."/>
            <person name="Tang X."/>
            <person name="Wang J."/>
            <person name="Xiong Z."/>
            <person name="Dong J."/>
            <person name="Xue Y."/>
            <person name="Zhu Y."/>
            <person name="Xu X."/>
            <person name="Sun L."/>
            <person name="Chen S."/>
            <person name="Nie H."/>
            <person name="Peng J."/>
            <person name="Xu J."/>
            <person name="Wang Y."/>
            <person name="Yuan Z."/>
            <person name="Wen Y."/>
            <person name="Yao Z."/>
            <person name="Shen Y."/>
            <person name="Qiang B."/>
            <person name="Hou Y."/>
            <person name="Yu J."/>
            <person name="Jin Q."/>
        </authorList>
    </citation>
    <scope>NUCLEOTIDE SEQUENCE [LARGE SCALE GENOMIC DNA]</scope>
    <source>
        <strain>Ss046</strain>
    </source>
</reference>
<gene>
    <name evidence="1" type="primary">htpX</name>
    <name type="ordered locus">SSON_1332</name>
</gene>
<feature type="chain" id="PRO_1000020945" description="Protease HtpX">
    <location>
        <begin position="1"/>
        <end position="293"/>
    </location>
</feature>
<feature type="transmembrane region" description="Helical" evidence="1">
    <location>
        <begin position="4"/>
        <end position="24"/>
    </location>
</feature>
<feature type="transmembrane region" description="Helical" evidence="1">
    <location>
        <begin position="34"/>
        <end position="54"/>
    </location>
</feature>
<feature type="transmembrane region" description="Helical" evidence="1">
    <location>
        <begin position="158"/>
        <end position="178"/>
    </location>
</feature>
<feature type="transmembrane region" description="Helical" evidence="1">
    <location>
        <begin position="193"/>
        <end position="213"/>
    </location>
</feature>
<feature type="active site" evidence="1">
    <location>
        <position position="140"/>
    </location>
</feature>
<feature type="binding site" evidence="1">
    <location>
        <position position="139"/>
    </location>
    <ligand>
        <name>Zn(2+)</name>
        <dbReference type="ChEBI" id="CHEBI:29105"/>
        <note>catalytic</note>
    </ligand>
</feature>
<feature type="binding site" evidence="1">
    <location>
        <position position="143"/>
    </location>
    <ligand>
        <name>Zn(2+)</name>
        <dbReference type="ChEBI" id="CHEBI:29105"/>
        <note>catalytic</note>
    </ligand>
</feature>
<feature type="binding site" evidence="1">
    <location>
        <position position="222"/>
    </location>
    <ligand>
        <name>Zn(2+)</name>
        <dbReference type="ChEBI" id="CHEBI:29105"/>
        <note>catalytic</note>
    </ligand>
</feature>
<name>HTPX_SHISS</name>
<protein>
    <recommendedName>
        <fullName evidence="1">Protease HtpX</fullName>
        <ecNumber evidence="1">3.4.24.-</ecNumber>
    </recommendedName>
    <alternativeName>
        <fullName evidence="1">Heat shock protein HtpX</fullName>
    </alternativeName>
</protein>
<organism>
    <name type="scientific">Shigella sonnei (strain Ss046)</name>
    <dbReference type="NCBI Taxonomy" id="300269"/>
    <lineage>
        <taxon>Bacteria</taxon>
        <taxon>Pseudomonadati</taxon>
        <taxon>Pseudomonadota</taxon>
        <taxon>Gammaproteobacteria</taxon>
        <taxon>Enterobacterales</taxon>
        <taxon>Enterobacteriaceae</taxon>
        <taxon>Shigella</taxon>
    </lineage>
</organism>
<keyword id="KW-0997">Cell inner membrane</keyword>
<keyword id="KW-1003">Cell membrane</keyword>
<keyword id="KW-0378">Hydrolase</keyword>
<keyword id="KW-0472">Membrane</keyword>
<keyword id="KW-0479">Metal-binding</keyword>
<keyword id="KW-0482">Metalloprotease</keyword>
<keyword id="KW-0645">Protease</keyword>
<keyword id="KW-1185">Reference proteome</keyword>
<keyword id="KW-0346">Stress response</keyword>
<keyword id="KW-0812">Transmembrane</keyword>
<keyword id="KW-1133">Transmembrane helix</keyword>
<keyword id="KW-0862">Zinc</keyword>
<proteinExistence type="inferred from homology"/>
<accession>Q3Z2G8</accession>
<evidence type="ECO:0000255" key="1">
    <source>
        <dbReference type="HAMAP-Rule" id="MF_00188"/>
    </source>
</evidence>
<sequence length="293" mass="31957">MMRIALFLLTNLAVMVVFGLVLSLTGIQSSSVQGLMIMALLFGFGGSFVSLLMSKWMALRSVGGEVIEQPRNERERWLVNTVATQARQAGIAMPQVAIYHAPDINAFATGARRDASLVAVSTGLLQNMSPDEAEAVIAHEISHIANGDMVTMTLIQGVVNTFVIFISRILAQLAAGFMGGNRDEGEESNGNPLIYFAVATVLELVFGILASIITMWFSRHREFHADAGSAKLVGREKMIAALQRLKTSYEPQEATSMMAFCINGKSKSLSELFMTHPPLDKRIEALRTGEYLK</sequence>